<sequence length="170" mass="18727">MATQVKKELVAELVEKIKKAQSVVFVDYQGIKVNEETLLRKQMRENGAEYLVAKNRLFKIALKESGVEDSFDEILEGSTAFAFGYNDPVAPAKAVFDLAKAKAKAKLDVFKIKGGYLTGKKVSVKEVEELAKLPSREQLLSMLLNSMLGPIRKLAYATVAIADKKEGSAE</sequence>
<protein>
    <recommendedName>
        <fullName evidence="1">Large ribosomal subunit protein uL10</fullName>
    </recommendedName>
    <alternativeName>
        <fullName evidence="2">50S ribosomal protein L10</fullName>
    </alternativeName>
</protein>
<evidence type="ECO:0000255" key="1">
    <source>
        <dbReference type="HAMAP-Rule" id="MF_00362"/>
    </source>
</evidence>
<evidence type="ECO:0000305" key="2"/>
<reference key="1">
    <citation type="journal article" date="2002" name="J. Bacteriol.">
        <title>Genome sequence and analysis of the oral bacterium Fusobacterium nucleatum strain ATCC 25586.</title>
        <authorList>
            <person name="Kapatral V."/>
            <person name="Anderson I."/>
            <person name="Ivanova N."/>
            <person name="Reznik G."/>
            <person name="Los T."/>
            <person name="Lykidis A."/>
            <person name="Bhattacharyya A."/>
            <person name="Bartman A."/>
            <person name="Gardner W."/>
            <person name="Grechkin G."/>
            <person name="Zhu L."/>
            <person name="Vasieva O."/>
            <person name="Chu L."/>
            <person name="Kogan Y."/>
            <person name="Chaga O."/>
            <person name="Goltsman E."/>
            <person name="Bernal A."/>
            <person name="Larsen N."/>
            <person name="D'Souza M."/>
            <person name="Walunas T."/>
            <person name="Pusch G."/>
            <person name="Haselkorn R."/>
            <person name="Fonstein M."/>
            <person name="Kyrpides N.C."/>
            <person name="Overbeek R."/>
        </authorList>
    </citation>
    <scope>NUCLEOTIDE SEQUENCE [LARGE SCALE GENOMIC DNA]</scope>
    <source>
        <strain>ATCC 25586 / DSM 15643 / BCRC 10681 / CIP 101130 / JCM 8532 / KCTC 2640 / LMG 13131 / VPI 4355</strain>
    </source>
</reference>
<feature type="chain" id="PRO_0000154634" description="Large ribosomal subunit protein uL10">
    <location>
        <begin position="1"/>
        <end position="170"/>
    </location>
</feature>
<comment type="function">
    <text evidence="1">Forms part of the ribosomal stalk, playing a central role in the interaction of the ribosome with GTP-bound translation factors.</text>
</comment>
<comment type="subunit">
    <text evidence="1">Part of the ribosomal stalk of the 50S ribosomal subunit. The N-terminus interacts with L11 and the large rRNA to form the base of the stalk. The C-terminus forms an elongated spine to which L12 dimers bind in a sequential fashion forming a multimeric L10(L12)X complex.</text>
</comment>
<comment type="similarity">
    <text evidence="1">Belongs to the universal ribosomal protein uL10 family.</text>
</comment>
<organism>
    <name type="scientific">Fusobacterium nucleatum subsp. nucleatum (strain ATCC 25586 / DSM 15643 / BCRC 10681 / CIP 101130 / JCM 8532 / KCTC 2640 / LMG 13131 / VPI 4355)</name>
    <dbReference type="NCBI Taxonomy" id="190304"/>
    <lineage>
        <taxon>Bacteria</taxon>
        <taxon>Fusobacteriati</taxon>
        <taxon>Fusobacteriota</taxon>
        <taxon>Fusobacteriia</taxon>
        <taxon>Fusobacteriales</taxon>
        <taxon>Fusobacteriaceae</taxon>
        <taxon>Fusobacterium</taxon>
    </lineage>
</organism>
<dbReference type="EMBL" id="AE009951">
    <property type="protein sequence ID" value="AAL94123.1"/>
    <property type="molecule type" value="Genomic_DNA"/>
</dbReference>
<dbReference type="RefSeq" id="NP_602824.1">
    <property type="nucleotide sequence ID" value="NC_003454.1"/>
</dbReference>
<dbReference type="RefSeq" id="WP_005904072.1">
    <property type="nucleotide sequence ID" value="NZ_OZ209243.1"/>
</dbReference>
<dbReference type="SMR" id="Q8RHI4"/>
<dbReference type="FunCoup" id="Q8RHI4">
    <property type="interactions" value="388"/>
</dbReference>
<dbReference type="STRING" id="190304.FN2038"/>
<dbReference type="PaxDb" id="190304-FN2038"/>
<dbReference type="EnsemblBacteria" id="AAL94123">
    <property type="protein sequence ID" value="AAL94123"/>
    <property type="gene ID" value="FN2038"/>
</dbReference>
<dbReference type="GeneID" id="79782955"/>
<dbReference type="KEGG" id="fnu:FN2038"/>
<dbReference type="PATRIC" id="fig|190304.8.peg.501"/>
<dbReference type="eggNOG" id="COG0244">
    <property type="taxonomic scope" value="Bacteria"/>
</dbReference>
<dbReference type="HOGENOM" id="CLU_092227_2_0_0"/>
<dbReference type="InParanoid" id="Q8RHI4"/>
<dbReference type="BioCyc" id="FNUC190304:G1FZS-525-MONOMER"/>
<dbReference type="Proteomes" id="UP000002521">
    <property type="component" value="Chromosome"/>
</dbReference>
<dbReference type="GO" id="GO:0022625">
    <property type="term" value="C:cytosolic large ribosomal subunit"/>
    <property type="evidence" value="ECO:0000318"/>
    <property type="project" value="GO_Central"/>
</dbReference>
<dbReference type="GO" id="GO:0070180">
    <property type="term" value="F:large ribosomal subunit rRNA binding"/>
    <property type="evidence" value="ECO:0007669"/>
    <property type="project" value="UniProtKB-UniRule"/>
</dbReference>
<dbReference type="GO" id="GO:0003735">
    <property type="term" value="F:structural constituent of ribosome"/>
    <property type="evidence" value="ECO:0000318"/>
    <property type="project" value="GO_Central"/>
</dbReference>
<dbReference type="GO" id="GO:0006412">
    <property type="term" value="P:translation"/>
    <property type="evidence" value="ECO:0000318"/>
    <property type="project" value="GO_Central"/>
</dbReference>
<dbReference type="CDD" id="cd05797">
    <property type="entry name" value="Ribosomal_L10"/>
    <property type="match status" value="1"/>
</dbReference>
<dbReference type="Gene3D" id="3.30.70.1730">
    <property type="match status" value="1"/>
</dbReference>
<dbReference type="Gene3D" id="6.10.250.290">
    <property type="match status" value="1"/>
</dbReference>
<dbReference type="HAMAP" id="MF_00362">
    <property type="entry name" value="Ribosomal_uL10"/>
    <property type="match status" value="1"/>
</dbReference>
<dbReference type="InterPro" id="IPR001790">
    <property type="entry name" value="Ribosomal_uL10"/>
</dbReference>
<dbReference type="InterPro" id="IPR043141">
    <property type="entry name" value="Ribosomal_uL10-like_sf"/>
</dbReference>
<dbReference type="InterPro" id="IPR022973">
    <property type="entry name" value="Ribosomal_uL10_bac"/>
</dbReference>
<dbReference type="InterPro" id="IPR047865">
    <property type="entry name" value="Ribosomal_uL10_bac_type"/>
</dbReference>
<dbReference type="NCBIfam" id="NF000955">
    <property type="entry name" value="PRK00099.1-1"/>
    <property type="match status" value="1"/>
</dbReference>
<dbReference type="PANTHER" id="PTHR11560">
    <property type="entry name" value="39S RIBOSOMAL PROTEIN L10, MITOCHONDRIAL"/>
    <property type="match status" value="1"/>
</dbReference>
<dbReference type="Pfam" id="PF00466">
    <property type="entry name" value="Ribosomal_L10"/>
    <property type="match status" value="1"/>
</dbReference>
<dbReference type="SUPFAM" id="SSF160369">
    <property type="entry name" value="Ribosomal protein L10-like"/>
    <property type="match status" value="1"/>
</dbReference>
<gene>
    <name evidence="1" type="primary">rplJ</name>
    <name type="ordered locus">FN2038</name>
</gene>
<proteinExistence type="inferred from homology"/>
<keyword id="KW-1185">Reference proteome</keyword>
<keyword id="KW-0687">Ribonucleoprotein</keyword>
<keyword id="KW-0689">Ribosomal protein</keyword>
<keyword id="KW-0694">RNA-binding</keyword>
<keyword id="KW-0699">rRNA-binding</keyword>
<accession>Q8RHI4</accession>
<name>RL10_FUSNN</name>